<comment type="function">
    <text evidence="1">Displays ATPase and GTPase activities.</text>
</comment>
<comment type="similarity">
    <text evidence="1">Belongs to the RapZ-like family.</text>
</comment>
<comment type="sequence caution" evidence="3">
    <conflict type="erroneous initiation">
        <sequence resource="EMBL-CDS" id="ACL29653"/>
    </conflict>
</comment>
<protein>
    <recommendedName>
        <fullName evidence="1">Nucleotide-binding protein BLA_1368</fullName>
    </recommendedName>
</protein>
<gene>
    <name type="ordered locus">BLA_1368</name>
</gene>
<reference key="1">
    <citation type="journal article" date="2009" name="J. Bacteriol.">
        <title>Genome sequence of the probiotic bacterium Bifidobacterium animalis subsp. lactis AD011.</title>
        <authorList>
            <person name="Kim J.F."/>
            <person name="Jeong H."/>
            <person name="Yu D.S."/>
            <person name="Choi S.-H."/>
            <person name="Hur C.-G."/>
            <person name="Park M.-S."/>
            <person name="Yoon S.H."/>
            <person name="Kim D.-W."/>
            <person name="Ji G.E."/>
            <person name="Park H.-S."/>
            <person name="Oh T.K."/>
        </authorList>
    </citation>
    <scope>NUCLEOTIDE SEQUENCE [LARGE SCALE GENOMIC DNA]</scope>
    <source>
        <strain>AD011</strain>
    </source>
</reference>
<dbReference type="EMBL" id="CP001213">
    <property type="protein sequence ID" value="ACL29653.1"/>
    <property type="status" value="ALT_INIT"/>
    <property type="molecule type" value="Genomic_DNA"/>
</dbReference>
<dbReference type="SMR" id="B8DUH4"/>
<dbReference type="STRING" id="442563.BLA_1368"/>
<dbReference type="KEGG" id="bla:BLA_1368"/>
<dbReference type="PATRIC" id="fig|442563.4.peg.1432"/>
<dbReference type="HOGENOM" id="CLU_059558_0_0_11"/>
<dbReference type="Proteomes" id="UP000002456">
    <property type="component" value="Chromosome"/>
</dbReference>
<dbReference type="GO" id="GO:0005524">
    <property type="term" value="F:ATP binding"/>
    <property type="evidence" value="ECO:0007669"/>
    <property type="project" value="UniProtKB-UniRule"/>
</dbReference>
<dbReference type="GO" id="GO:0005525">
    <property type="term" value="F:GTP binding"/>
    <property type="evidence" value="ECO:0007669"/>
    <property type="project" value="UniProtKB-UniRule"/>
</dbReference>
<dbReference type="Gene3D" id="3.40.50.300">
    <property type="entry name" value="P-loop containing nucleotide triphosphate hydrolases"/>
    <property type="match status" value="1"/>
</dbReference>
<dbReference type="HAMAP" id="MF_00636">
    <property type="entry name" value="RapZ_like"/>
    <property type="match status" value="1"/>
</dbReference>
<dbReference type="InterPro" id="IPR027417">
    <property type="entry name" value="P-loop_NTPase"/>
</dbReference>
<dbReference type="InterPro" id="IPR005337">
    <property type="entry name" value="RapZ-like"/>
</dbReference>
<dbReference type="InterPro" id="IPR053930">
    <property type="entry name" value="RapZ-like_N"/>
</dbReference>
<dbReference type="InterPro" id="IPR053931">
    <property type="entry name" value="RapZ_C"/>
</dbReference>
<dbReference type="NCBIfam" id="NF003828">
    <property type="entry name" value="PRK05416.1"/>
    <property type="match status" value="1"/>
</dbReference>
<dbReference type="PANTHER" id="PTHR30448">
    <property type="entry name" value="RNASE ADAPTER PROTEIN RAPZ"/>
    <property type="match status" value="1"/>
</dbReference>
<dbReference type="PANTHER" id="PTHR30448:SF0">
    <property type="entry name" value="RNASE ADAPTER PROTEIN RAPZ"/>
    <property type="match status" value="1"/>
</dbReference>
<dbReference type="Pfam" id="PF22740">
    <property type="entry name" value="PapZ_C"/>
    <property type="match status" value="1"/>
</dbReference>
<dbReference type="Pfam" id="PF03668">
    <property type="entry name" value="RapZ-like_N"/>
    <property type="match status" value="1"/>
</dbReference>
<dbReference type="PIRSF" id="PIRSF005052">
    <property type="entry name" value="P-loopkin"/>
    <property type="match status" value="1"/>
</dbReference>
<dbReference type="SUPFAM" id="SSF52540">
    <property type="entry name" value="P-loop containing nucleoside triphosphate hydrolases"/>
    <property type="match status" value="1"/>
</dbReference>
<feature type="chain" id="PRO_0000383217" description="Nucleotide-binding protein BLA_1368">
    <location>
        <begin position="1"/>
        <end position="310"/>
    </location>
</feature>
<feature type="region of interest" description="Disordered" evidence="2">
    <location>
        <begin position="1"/>
        <end position="21"/>
    </location>
</feature>
<feature type="binding site" evidence="1">
    <location>
        <begin position="32"/>
        <end position="39"/>
    </location>
    <ligand>
        <name>ATP</name>
        <dbReference type="ChEBI" id="CHEBI:30616"/>
    </ligand>
</feature>
<feature type="binding site" evidence="1">
    <location>
        <begin position="83"/>
        <end position="86"/>
    </location>
    <ligand>
        <name>GTP</name>
        <dbReference type="ChEBI" id="CHEBI:37565"/>
    </ligand>
</feature>
<evidence type="ECO:0000255" key="1">
    <source>
        <dbReference type="HAMAP-Rule" id="MF_00636"/>
    </source>
</evidence>
<evidence type="ECO:0000256" key="2">
    <source>
        <dbReference type="SAM" id="MobiDB-lite"/>
    </source>
</evidence>
<evidence type="ECO:0000305" key="3"/>
<accession>B8DUH4</accession>
<name>Y1368_BIFA0</name>
<keyword id="KW-0067">ATP-binding</keyword>
<keyword id="KW-0342">GTP-binding</keyword>
<keyword id="KW-0547">Nucleotide-binding</keyword>
<keyword id="KW-1185">Reference proteome</keyword>
<sequence length="310" mass="34470">MQSARNEQRGTGPESPHAASPTEGFEVLLITGMSGAGRSHAAHSIEDMGWYVVDNMPPKLLEPMVDMMTASKSGFHKLAAVIDVRSRDYFMDLSSVLSHLDDLGLKTRILFLDADDNVLVKRFESVRRPHPLQQGNRLIDGIHEERRLLENLEERADIVINTSKLSIHQLSTKLYEALTGNGPTTVSVHIFSFGFKYGIPIDADFVADVRFLPNPYWVPQLRELNGHDAPVSEYVLSNDKATQFLDAYEKAIEIAIQGYAQEDKHYVTIAIGCTGGQHRSVAMSEALASRLRSHGLSVSVSARELDRKTQ</sequence>
<organism>
    <name type="scientific">Bifidobacterium animalis subsp. lactis (strain AD011)</name>
    <dbReference type="NCBI Taxonomy" id="442563"/>
    <lineage>
        <taxon>Bacteria</taxon>
        <taxon>Bacillati</taxon>
        <taxon>Actinomycetota</taxon>
        <taxon>Actinomycetes</taxon>
        <taxon>Bifidobacteriales</taxon>
        <taxon>Bifidobacteriaceae</taxon>
        <taxon>Bifidobacterium</taxon>
    </lineage>
</organism>
<proteinExistence type="inferred from homology"/>